<feature type="signal peptide" evidence="6">
    <location>
        <begin position="1"/>
        <end position="25"/>
    </location>
</feature>
<feature type="propeptide" id="PRO_0000375877" evidence="1">
    <location>
        <begin position="26"/>
        <end position="159"/>
    </location>
</feature>
<feature type="chain" id="PRO_0000375878" description="Cadherin-2">
    <location>
        <begin position="160"/>
        <end position="906"/>
    </location>
</feature>
<feature type="topological domain" description="Extracellular" evidence="6">
    <location>
        <begin position="160"/>
        <end position="724"/>
    </location>
</feature>
<feature type="transmembrane region" description="Helical" evidence="6">
    <location>
        <begin position="725"/>
        <end position="745"/>
    </location>
</feature>
<feature type="topological domain" description="Cytoplasmic" evidence="6">
    <location>
        <begin position="746"/>
        <end position="906"/>
    </location>
</feature>
<feature type="domain" description="Cadherin 1" evidence="7">
    <location>
        <begin position="160"/>
        <end position="267"/>
    </location>
</feature>
<feature type="domain" description="Cadherin 2" evidence="7">
    <location>
        <begin position="268"/>
        <end position="382"/>
    </location>
</feature>
<feature type="domain" description="Cadherin 3" evidence="7">
    <location>
        <begin position="383"/>
        <end position="497"/>
    </location>
</feature>
<feature type="domain" description="Cadherin 4" evidence="7">
    <location>
        <begin position="498"/>
        <end position="603"/>
    </location>
</feature>
<feature type="domain" description="Cadherin 5" evidence="7">
    <location>
        <begin position="604"/>
        <end position="714"/>
    </location>
</feature>
<feature type="region of interest" description="Disordered" evidence="8">
    <location>
        <begin position="863"/>
        <end position="884"/>
    </location>
</feature>
<feature type="compositionally biased region" description="Low complexity" evidence="8">
    <location>
        <begin position="863"/>
        <end position="880"/>
    </location>
</feature>
<feature type="binding site" evidence="3">
    <location>
        <position position="170"/>
    </location>
    <ligand>
        <name>Ca(2+)</name>
        <dbReference type="ChEBI" id="CHEBI:29108"/>
        <label>1</label>
    </ligand>
</feature>
<feature type="binding site" evidence="3">
    <location>
        <position position="170"/>
    </location>
    <ligand>
        <name>Ca(2+)</name>
        <dbReference type="ChEBI" id="CHEBI:29108"/>
        <label>2</label>
    </ligand>
</feature>
<feature type="binding site" evidence="3">
    <location>
        <position position="226"/>
    </location>
    <ligand>
        <name>Ca(2+)</name>
        <dbReference type="ChEBI" id="CHEBI:29108"/>
        <label>1</label>
    </ligand>
</feature>
<feature type="binding site" evidence="3">
    <location>
        <position position="228"/>
    </location>
    <ligand>
        <name>Ca(2+)</name>
        <dbReference type="ChEBI" id="CHEBI:29108"/>
        <label>1</label>
    </ligand>
</feature>
<feature type="binding site" evidence="3">
    <location>
        <position position="228"/>
    </location>
    <ligand>
        <name>Ca(2+)</name>
        <dbReference type="ChEBI" id="CHEBI:29108"/>
        <label>2</label>
    </ligand>
</feature>
<feature type="binding site" evidence="3">
    <location>
        <position position="259"/>
    </location>
    <ligand>
        <name>Ca(2+)</name>
        <dbReference type="ChEBI" id="CHEBI:29108"/>
        <label>2</label>
    </ligand>
</feature>
<feature type="binding site" evidence="3">
    <location>
        <position position="260"/>
    </location>
    <ligand>
        <name>Ca(2+)</name>
        <dbReference type="ChEBI" id="CHEBI:29108"/>
        <label>2</label>
    </ligand>
</feature>
<feature type="binding site" evidence="3">
    <location>
        <position position="261"/>
    </location>
    <ligand>
        <name>Ca(2+)</name>
        <dbReference type="ChEBI" id="CHEBI:29108"/>
        <label>3</label>
    </ligand>
</feature>
<feature type="binding site" evidence="3">
    <location>
        <position position="262"/>
    </location>
    <ligand>
        <name>Ca(2+)</name>
        <dbReference type="ChEBI" id="CHEBI:29108"/>
        <label>1</label>
    </ligand>
</feature>
<feature type="binding site" evidence="3">
    <location>
        <position position="262"/>
    </location>
    <ligand>
        <name>Ca(2+)</name>
        <dbReference type="ChEBI" id="CHEBI:29108"/>
        <label>2</label>
    </ligand>
</feature>
<feature type="binding site" evidence="3">
    <location>
        <position position="263"/>
    </location>
    <ligand>
        <name>Ca(2+)</name>
        <dbReference type="ChEBI" id="CHEBI:29108"/>
        <label>3</label>
    </ligand>
</feature>
<feature type="binding site" evidence="3">
    <location>
        <position position="293"/>
    </location>
    <ligand>
        <name>Ca(2+)</name>
        <dbReference type="ChEBI" id="CHEBI:29108"/>
        <label>3</label>
    </ligand>
</feature>
<feature type="binding site" evidence="3">
    <location>
        <position position="295"/>
    </location>
    <ligand>
        <name>Ca(2+)</name>
        <dbReference type="ChEBI" id="CHEBI:29108"/>
        <label>2</label>
    </ligand>
</feature>
<feature type="binding site" evidence="3">
    <location>
        <position position="301"/>
    </location>
    <ligand>
        <name>Ca(2+)</name>
        <dbReference type="ChEBI" id="CHEBI:29108"/>
        <label>3</label>
    </ligand>
</feature>
<feature type="binding site" evidence="3">
    <location>
        <position position="353"/>
    </location>
    <ligand>
        <name>Ca(2+)</name>
        <dbReference type="ChEBI" id="CHEBI:29108"/>
        <label>3</label>
    </ligand>
</feature>
<feature type="modified residue" description="Phosphoserine" evidence="4">
    <location>
        <position position="96"/>
    </location>
</feature>
<feature type="modified residue" description="Phosphoserine" evidence="4">
    <location>
        <position position="135"/>
    </location>
</feature>
<feature type="glycosylation site" description="N-linked (GlcNAc...) asparagine" evidence="6">
    <location>
        <position position="190"/>
    </location>
</feature>
<feature type="glycosylation site" description="N-linked (GlcNAc...) asparagine" evidence="6">
    <location>
        <position position="273"/>
    </location>
</feature>
<feature type="glycosylation site" description="N-linked (GlcNAc...) asparagine" evidence="6">
    <location>
        <position position="325"/>
    </location>
</feature>
<feature type="glycosylation site" description="N-linked (GlcNAc...) asparagine" evidence="6">
    <location>
        <position position="402"/>
    </location>
</feature>
<feature type="glycosylation site" description="N-linked (GlcNAc...) asparagine" evidence="6">
    <location>
        <position position="572"/>
    </location>
</feature>
<feature type="glycosylation site" description="N-linked (GlcNAc...) asparagine" evidence="6">
    <location>
        <position position="622"/>
    </location>
</feature>
<feature type="glycosylation site" description="N-linked (GlcNAc...) asparagine" evidence="6">
    <location>
        <position position="651"/>
    </location>
</feature>
<feature type="glycosylation site" description="N-linked (GlcNAc...) asparagine" evidence="6">
    <location>
        <position position="692"/>
    </location>
</feature>
<reference key="1">
    <citation type="submission" date="2011-03" db="EMBL/GenBank/DDBJ databases">
        <title>Version 3 of the genome sequence of Otolemur garnettii(Bushbaby).</title>
        <authorList>
            <consortium name="The Broad Institute Genome Sequencing Platform"/>
            <person name="Di Palma F."/>
            <person name="Johnson J."/>
            <person name="Lander E.S."/>
            <person name="Lindblad-Toh K."/>
            <person name="Jaffe D.B."/>
            <person name="Gnerre S."/>
            <person name="MacCallum I."/>
            <person name="Przybylski D."/>
            <person name="Ribeiro F.J."/>
            <person name="Burton J.N."/>
            <person name="Walker B.J."/>
            <person name="Sharpe T."/>
            <person name="Hall G."/>
        </authorList>
    </citation>
    <scope>NUCLEOTIDE SEQUENCE [LARGE SCALE GENOMIC DNA]</scope>
</reference>
<accession>B4USZ0</accession>
<name>CADH2_OTOGA</name>
<gene>
    <name type="primary">CDH2</name>
</gene>
<protein>
    <recommendedName>
        <fullName>Cadherin-2</fullName>
    </recommendedName>
    <alternativeName>
        <fullName>Neural cadherin</fullName>
        <shortName>N-cadherin</shortName>
    </alternativeName>
    <cdAntigenName>CD325</cdAntigenName>
</protein>
<evidence type="ECO:0000250" key="1"/>
<evidence type="ECO:0000250" key="2">
    <source>
        <dbReference type="UniProtKB" id="P10288"/>
    </source>
</evidence>
<evidence type="ECO:0000250" key="3">
    <source>
        <dbReference type="UniProtKB" id="P15116"/>
    </source>
</evidence>
<evidence type="ECO:0000250" key="4">
    <source>
        <dbReference type="UniProtKB" id="P19022"/>
    </source>
</evidence>
<evidence type="ECO:0000250" key="5">
    <source>
        <dbReference type="UniProtKB" id="Q9Z1Y3"/>
    </source>
</evidence>
<evidence type="ECO:0000255" key="6"/>
<evidence type="ECO:0000255" key="7">
    <source>
        <dbReference type="PROSITE-ProRule" id="PRU00043"/>
    </source>
</evidence>
<evidence type="ECO:0000256" key="8">
    <source>
        <dbReference type="SAM" id="MobiDB-lite"/>
    </source>
</evidence>
<keyword id="KW-0106">Calcium</keyword>
<keyword id="KW-0130">Cell adhesion</keyword>
<keyword id="KW-0965">Cell junction</keyword>
<keyword id="KW-1003">Cell membrane</keyword>
<keyword id="KW-0165">Cleavage on pair of basic residues</keyword>
<keyword id="KW-0325">Glycoprotein</keyword>
<keyword id="KW-0472">Membrane</keyword>
<keyword id="KW-0479">Metal-binding</keyword>
<keyword id="KW-0597">Phosphoprotein</keyword>
<keyword id="KW-1185">Reference proteome</keyword>
<keyword id="KW-0677">Repeat</keyword>
<keyword id="KW-0732">Signal</keyword>
<keyword id="KW-0812">Transmembrane</keyword>
<keyword id="KW-1133">Transmembrane helix</keyword>
<organism>
    <name type="scientific">Otolemur garnettii</name>
    <name type="common">Small-eared galago</name>
    <name type="synonym">Garnett's greater bushbaby</name>
    <dbReference type="NCBI Taxonomy" id="30611"/>
    <lineage>
        <taxon>Eukaryota</taxon>
        <taxon>Metazoa</taxon>
        <taxon>Chordata</taxon>
        <taxon>Craniata</taxon>
        <taxon>Vertebrata</taxon>
        <taxon>Euteleostomi</taxon>
        <taxon>Mammalia</taxon>
        <taxon>Eutheria</taxon>
        <taxon>Euarchontoglires</taxon>
        <taxon>Primates</taxon>
        <taxon>Strepsirrhini</taxon>
        <taxon>Lorisiformes</taxon>
        <taxon>Galagidae</taxon>
        <taxon>Otolemur</taxon>
    </lineage>
</organism>
<sequence>MCRIAGAPRTLLPLLAALLQASVEASGEIALCKTGFPEDVYSAVLSKDVHEGQPLLSVKFSNCNGKRKVQYESSEPADFKVDEDGMVYAVRSFPLSSEHSKFLIYAQDKETQEKWQVAVKLSLKPTLTEESVKESPEIEEIVFPRQLTKHNGYLQRQKRDWVIPPINLPENSRGPFPQELVRIRSDRDKNLSLRYSVTGPGADQPPTGIFIINPISGQLSVTKPLDRELIARFHLRAHAVDINGNQVENPIDIVINVIDMNDNRPEFLHQVWNGTVPEGSKPGTYVMTVTAIDADDPNALNGMLRYRILSQAPSTPSPNMFTINNETGDIITVAAGLDREKVQQYTLIIQATDMEGNPTYGLSNTATAIITVTDVNDNPPEFTAMTFYGEVPENRVDVIVANLTVTDKDQPHTQAWNAVYRISGGDPAGRFAIQTDPNSNDGLVTVVKPIDFETNRMFVLTVAAENQVPLAKGIQHPPQSTATVSVTVIDVNENPYFAPNPKIIRQEEGLHSGTMLTTFTAQDPDRYMQQNIRYTKLSDPANWLKIDPVNGQITTIAVLDRESPNVKNNIYNATFLASDNGIPPMSGTGTLQIYLLDINDNAPQVLPQEAETCETPDPNSINITALDYDIDPNAGPFAFDLPLSPGTIKRNWTITRLNGDFAQLNLKIKFLEAGIYEVPIIITDSGNPPKSNISILRVKVCQCDSNGDCTDVDRIVGAGLGTGAIIAILLCIIILLILVLMFVVWMKRRDKERQAKQLLIDPEDDVRDNILKYDEEGGGEEDQDYDLSQLQQPDTVEPDAIKPVGIRRLDERPIHAEPQYPVRSAAPHPGDIGDFINEGLKAADNDPTAPPYDSLLVFDYEGSGSTAGSLSSLNSSSSGGEQDYDYLNDWGPRFKKLAEMYGGGDD</sequence>
<proteinExistence type="inferred from homology"/>
<comment type="function">
    <text evidence="2 3">Calcium-dependent cell adhesion protein; preferentially mediates homotypic cell-cell adhesion by dimerization with a CDH2 chain from another cell. Cadherins may thus contribute to the sorting of heterogeneous cell types. Acts as a regulator of neural stem cells quiescence by mediating anchorage of neural stem cells to ependymocytes in the adult subependymal zone: upon cleavage by MMP24, CDH2-mediated anchorage is affected, leading to modulate neural stem cell quiescence. Plays a role in cell-to-cell junction formation between pancreatic beta cells and neural crest stem (NCS) cells, promoting the formation of processes by NCS cells (By similarity). Required for proper neurite branching. Required for pre- and postsynaptic organization (By similarity). CDH2 may be involved in neuronal recognition mechanism. In hippocampal neurons, may regulate dendritic spine density.</text>
</comment>
<comment type="subunit">
    <text evidence="3 4 5">Homodimer (via extracellular region). Can also form heterodimers with other cadherins (via extracellular region). Dimerization occurs in trans, i.e. with a cadherin chain from another cell (By similarity). Interacts with CDCP1 (By similarity). Interacts with PCDH8; this complex may also include TAOK2 (By similarity). The interaction with PCDH8 may lead to internalization through TAOK2/p38 MAPK pathway (By similarity). Identified in a complex containing FGFR4, NCAM1, CDH2, PLCG1, FRS2, SRC, SHC1, GAP43 and CTTN. May interact with OBSCN (via protein kinase domain 2) (By similarity). Interacts with FBXO45 (By similarity).</text>
</comment>
<comment type="subcellular location">
    <subcellularLocation>
        <location evidence="3">Cell membrane</location>
        <topology evidence="6">Single-pass type I membrane protein</topology>
    </subcellularLocation>
    <subcellularLocation>
        <location evidence="3">Cell membrane</location>
        <location evidence="3">Sarcolemma</location>
    </subcellularLocation>
    <subcellularLocation>
        <location evidence="4">Cell junction</location>
    </subcellularLocation>
    <subcellularLocation>
        <location evidence="3">Cell surface</location>
    </subcellularLocation>
    <subcellularLocation>
        <location evidence="3">Cell junction</location>
        <location evidence="3">Desmosome</location>
    </subcellularLocation>
    <subcellularLocation>
        <location evidence="3">Cell junction</location>
        <location evidence="3">Adherens junction</location>
    </subcellularLocation>
    <text evidence="3">Colocalizes with TMEM65 at the intercalated disk in cardiomyocytes (By similarity). Colocalizes with OBSCN at the intercalated disk and sarcolemma in cardiomyocytes (By similarity).</text>
</comment>
<comment type="domain">
    <text evidence="3">Three calcium ions are usually bound at the interface of each cadherin domain and rigidify the connections, imparting a strong curvature to the full-length ectodomain. Calcium-binding sites are occupied sequentially in the order of site 3, then site 2 and site 1.</text>
</comment>
<comment type="PTM">
    <text evidence="3">Cleaved by MMP24. Ectodomain cleavage leads to the generation of a soluble 90 kDa N-terminal soluble fragment and a 45 kDa membrane-bound C-terminal fragment 1 (CTF1), which is further cleaved by gamma-secretase into a 35 kDa (By similarity). Cleavage in neural stem cells by MMP24 affects CDH2-mediated anchorage of neural stem cells to ependymocytes in the adult subependymal zone, leading to modulate neural stem cell quiescence (By similarity).</text>
</comment>
<comment type="PTM">
    <text evidence="3">May be phosphorylated by OBSCN.</text>
</comment>
<dbReference type="EMBL" id="DP000883">
    <property type="protein sequence ID" value="ACG69456.1"/>
    <property type="molecule type" value="Genomic_DNA"/>
</dbReference>
<dbReference type="SMR" id="B4USZ0"/>
<dbReference type="FunCoup" id="B4USZ0">
    <property type="interactions" value="451"/>
</dbReference>
<dbReference type="STRING" id="30611.ENSOGAP00000002127"/>
<dbReference type="GlyCosmos" id="B4USZ0">
    <property type="glycosylation" value="8 sites, No reported glycans"/>
</dbReference>
<dbReference type="eggNOG" id="KOG3594">
    <property type="taxonomic scope" value="Eukaryota"/>
</dbReference>
<dbReference type="InParanoid" id="B4USZ0"/>
<dbReference type="Proteomes" id="UP000005225">
    <property type="component" value="Unassembled WGS sequence"/>
</dbReference>
<dbReference type="GO" id="GO:0005912">
    <property type="term" value="C:adherens junction"/>
    <property type="evidence" value="ECO:0000250"/>
    <property type="project" value="UniProtKB"/>
</dbReference>
<dbReference type="GO" id="GO:0045177">
    <property type="term" value="C:apical part of cell"/>
    <property type="evidence" value="ECO:0007669"/>
    <property type="project" value="TreeGrafter"/>
</dbReference>
<dbReference type="GO" id="GO:0016342">
    <property type="term" value="C:catenin complex"/>
    <property type="evidence" value="ECO:0007669"/>
    <property type="project" value="TreeGrafter"/>
</dbReference>
<dbReference type="GO" id="GO:0030054">
    <property type="term" value="C:cell junction"/>
    <property type="evidence" value="ECO:0000250"/>
    <property type="project" value="UniProtKB"/>
</dbReference>
<dbReference type="GO" id="GO:0009986">
    <property type="term" value="C:cell surface"/>
    <property type="evidence" value="ECO:0000250"/>
    <property type="project" value="UniProtKB"/>
</dbReference>
<dbReference type="GO" id="GO:0005911">
    <property type="term" value="C:cell-cell junction"/>
    <property type="evidence" value="ECO:0000250"/>
    <property type="project" value="UniProtKB"/>
</dbReference>
<dbReference type="GO" id="GO:0005737">
    <property type="term" value="C:cytoplasm"/>
    <property type="evidence" value="ECO:0007669"/>
    <property type="project" value="TreeGrafter"/>
</dbReference>
<dbReference type="GO" id="GO:0030057">
    <property type="term" value="C:desmosome"/>
    <property type="evidence" value="ECO:0000250"/>
    <property type="project" value="UniProtKB"/>
</dbReference>
<dbReference type="GO" id="GO:0014704">
    <property type="term" value="C:intercalated disc"/>
    <property type="evidence" value="ECO:0000250"/>
    <property type="project" value="UniProtKB"/>
</dbReference>
<dbReference type="GO" id="GO:0030027">
    <property type="term" value="C:lamellipodium"/>
    <property type="evidence" value="ECO:0007669"/>
    <property type="project" value="TreeGrafter"/>
</dbReference>
<dbReference type="GO" id="GO:0043005">
    <property type="term" value="C:neuron projection"/>
    <property type="evidence" value="ECO:0007669"/>
    <property type="project" value="TreeGrafter"/>
</dbReference>
<dbReference type="GO" id="GO:0005886">
    <property type="term" value="C:plasma membrane"/>
    <property type="evidence" value="ECO:0000250"/>
    <property type="project" value="UniProtKB"/>
</dbReference>
<dbReference type="GO" id="GO:0014069">
    <property type="term" value="C:postsynaptic density"/>
    <property type="evidence" value="ECO:0007669"/>
    <property type="project" value="TreeGrafter"/>
</dbReference>
<dbReference type="GO" id="GO:0099634">
    <property type="term" value="C:postsynaptic specialization membrane"/>
    <property type="evidence" value="ECO:0007669"/>
    <property type="project" value="TreeGrafter"/>
</dbReference>
<dbReference type="GO" id="GO:0048787">
    <property type="term" value="C:presynaptic active zone membrane"/>
    <property type="evidence" value="ECO:0007669"/>
    <property type="project" value="TreeGrafter"/>
</dbReference>
<dbReference type="GO" id="GO:0042383">
    <property type="term" value="C:sarcolemma"/>
    <property type="evidence" value="ECO:0007669"/>
    <property type="project" value="UniProtKB-SubCell"/>
</dbReference>
<dbReference type="GO" id="GO:0008013">
    <property type="term" value="F:beta-catenin binding"/>
    <property type="evidence" value="ECO:0007669"/>
    <property type="project" value="TreeGrafter"/>
</dbReference>
<dbReference type="GO" id="GO:0045296">
    <property type="term" value="F:cadherin binding"/>
    <property type="evidence" value="ECO:0007669"/>
    <property type="project" value="TreeGrafter"/>
</dbReference>
<dbReference type="GO" id="GO:0005509">
    <property type="term" value="F:calcium ion binding"/>
    <property type="evidence" value="ECO:0000250"/>
    <property type="project" value="UniProtKB"/>
</dbReference>
<dbReference type="GO" id="GO:0034332">
    <property type="term" value="P:adherens junction organization"/>
    <property type="evidence" value="ECO:0007669"/>
    <property type="project" value="TreeGrafter"/>
</dbReference>
<dbReference type="GO" id="GO:0016339">
    <property type="term" value="P:calcium-dependent cell-cell adhesion via plasma membrane cell adhesion molecules"/>
    <property type="evidence" value="ECO:0007669"/>
    <property type="project" value="TreeGrafter"/>
</dbReference>
<dbReference type="GO" id="GO:0016477">
    <property type="term" value="P:cell migration"/>
    <property type="evidence" value="ECO:0007669"/>
    <property type="project" value="TreeGrafter"/>
</dbReference>
<dbReference type="GO" id="GO:0000902">
    <property type="term" value="P:cell morphogenesis"/>
    <property type="evidence" value="ECO:0007669"/>
    <property type="project" value="TreeGrafter"/>
</dbReference>
<dbReference type="GO" id="GO:0098609">
    <property type="term" value="P:cell-cell adhesion"/>
    <property type="evidence" value="ECO:0000250"/>
    <property type="project" value="UniProtKB"/>
</dbReference>
<dbReference type="GO" id="GO:0044331">
    <property type="term" value="P:cell-cell adhesion mediated by cadherin"/>
    <property type="evidence" value="ECO:0000250"/>
    <property type="project" value="UniProtKB"/>
</dbReference>
<dbReference type="GO" id="GO:0007043">
    <property type="term" value="P:cell-cell junction assembly"/>
    <property type="evidence" value="ECO:0000250"/>
    <property type="project" value="UniProtKB"/>
</dbReference>
<dbReference type="GO" id="GO:0010001">
    <property type="term" value="P:glial cell differentiation"/>
    <property type="evidence" value="ECO:0000250"/>
    <property type="project" value="UniProtKB"/>
</dbReference>
<dbReference type="GO" id="GO:0007156">
    <property type="term" value="P:homophilic cell adhesion via plasma membrane adhesion molecules"/>
    <property type="evidence" value="ECO:0007669"/>
    <property type="project" value="InterPro"/>
</dbReference>
<dbReference type="GO" id="GO:0014032">
    <property type="term" value="P:neural crest cell development"/>
    <property type="evidence" value="ECO:0000250"/>
    <property type="project" value="UniProtKB"/>
</dbReference>
<dbReference type="GO" id="GO:0097150">
    <property type="term" value="P:neuronal stem cell population maintenance"/>
    <property type="evidence" value="ECO:0000250"/>
    <property type="project" value="UniProtKB"/>
</dbReference>
<dbReference type="GO" id="GO:0007416">
    <property type="term" value="P:synapse assembly"/>
    <property type="evidence" value="ECO:0007669"/>
    <property type="project" value="TreeGrafter"/>
</dbReference>
<dbReference type="GO" id="GO:0097091">
    <property type="term" value="P:synaptic vesicle clustering"/>
    <property type="evidence" value="ECO:0000250"/>
    <property type="project" value="UniProtKB"/>
</dbReference>
<dbReference type="GO" id="GO:0003323">
    <property type="term" value="P:type B pancreatic cell development"/>
    <property type="evidence" value="ECO:0000250"/>
    <property type="project" value="UniProtKB"/>
</dbReference>
<dbReference type="CDD" id="cd11304">
    <property type="entry name" value="Cadherin_repeat"/>
    <property type="match status" value="3"/>
</dbReference>
<dbReference type="FunFam" id="2.60.40.60:FF:000011">
    <property type="entry name" value="Cadherin 1"/>
    <property type="match status" value="1"/>
</dbReference>
<dbReference type="FunFam" id="2.60.40.60:FF:000019">
    <property type="entry name" value="Cadherin 2"/>
    <property type="match status" value="1"/>
</dbReference>
<dbReference type="FunFam" id="2.60.40.60:FF:000022">
    <property type="entry name" value="Cadherin 2"/>
    <property type="match status" value="1"/>
</dbReference>
<dbReference type="FunFam" id="2.60.40.60:FF:000027">
    <property type="entry name" value="Cadherin 2"/>
    <property type="match status" value="1"/>
</dbReference>
<dbReference type="FunFam" id="2.60.40.60:FF:000045">
    <property type="entry name" value="Cadherin 2"/>
    <property type="match status" value="1"/>
</dbReference>
<dbReference type="FunFam" id="4.10.900.10:FF:000001">
    <property type="entry name" value="Cadherin 2"/>
    <property type="match status" value="1"/>
</dbReference>
<dbReference type="FunFam" id="2.60.40.60:FF:000139">
    <property type="entry name" value="Cadherin-2 preproprotein"/>
    <property type="match status" value="1"/>
</dbReference>
<dbReference type="Gene3D" id="2.60.40.60">
    <property type="entry name" value="Cadherins"/>
    <property type="match status" value="6"/>
</dbReference>
<dbReference type="Gene3D" id="4.10.900.10">
    <property type="entry name" value="TCF3-CBD (Catenin binding domain)"/>
    <property type="match status" value="1"/>
</dbReference>
<dbReference type="InterPro" id="IPR039808">
    <property type="entry name" value="Cadherin"/>
</dbReference>
<dbReference type="InterPro" id="IPR002126">
    <property type="entry name" value="Cadherin-like_dom"/>
</dbReference>
<dbReference type="InterPro" id="IPR015919">
    <property type="entry name" value="Cadherin-like_sf"/>
</dbReference>
<dbReference type="InterPro" id="IPR020894">
    <property type="entry name" value="Cadherin_CS"/>
</dbReference>
<dbReference type="InterPro" id="IPR014868">
    <property type="entry name" value="Cadherin_pro_dom"/>
</dbReference>
<dbReference type="InterPro" id="IPR000233">
    <property type="entry name" value="Cadherin_Y-type_LIR"/>
</dbReference>
<dbReference type="InterPro" id="IPR027397">
    <property type="entry name" value="Catenin-bd_sf"/>
</dbReference>
<dbReference type="PANTHER" id="PTHR24027:SF79">
    <property type="entry name" value="CADHERIN-2"/>
    <property type="match status" value="1"/>
</dbReference>
<dbReference type="PANTHER" id="PTHR24027">
    <property type="entry name" value="CADHERIN-23"/>
    <property type="match status" value="1"/>
</dbReference>
<dbReference type="Pfam" id="PF01049">
    <property type="entry name" value="CADH_Y-type_LIR"/>
    <property type="match status" value="1"/>
</dbReference>
<dbReference type="Pfam" id="PF00028">
    <property type="entry name" value="Cadherin"/>
    <property type="match status" value="5"/>
</dbReference>
<dbReference type="Pfam" id="PF08758">
    <property type="entry name" value="Cadherin_pro"/>
    <property type="match status" value="1"/>
</dbReference>
<dbReference type="PRINTS" id="PR00205">
    <property type="entry name" value="CADHERIN"/>
</dbReference>
<dbReference type="PRINTS" id="PR01820">
    <property type="entry name" value="DESMOCOLLIN"/>
</dbReference>
<dbReference type="SMART" id="SM00112">
    <property type="entry name" value="CA"/>
    <property type="match status" value="5"/>
</dbReference>
<dbReference type="SMART" id="SM01055">
    <property type="entry name" value="Cadherin_pro"/>
    <property type="match status" value="1"/>
</dbReference>
<dbReference type="SUPFAM" id="SSF49313">
    <property type="entry name" value="Cadherin-like"/>
    <property type="match status" value="6"/>
</dbReference>
<dbReference type="PROSITE" id="PS00232">
    <property type="entry name" value="CADHERIN_1"/>
    <property type="match status" value="3"/>
</dbReference>
<dbReference type="PROSITE" id="PS50268">
    <property type="entry name" value="CADHERIN_2"/>
    <property type="match status" value="5"/>
</dbReference>